<protein>
    <recommendedName>
        <fullName evidence="1">3-hydroxyacyl-[acyl-carrier-protein] dehydratase FabZ</fullName>
        <ecNumber evidence="1">4.2.1.59</ecNumber>
    </recommendedName>
    <alternativeName>
        <fullName evidence="1">(3R)-hydroxymyristoyl-[acyl-carrier-protein] dehydratase</fullName>
        <shortName evidence="1">(3R)-hydroxymyristoyl-ACP dehydrase</shortName>
    </alternativeName>
    <alternativeName>
        <fullName evidence="1">Beta-hydroxyacyl-ACP dehydratase</fullName>
    </alternativeName>
</protein>
<gene>
    <name evidence="1" type="primary">fabZ</name>
    <name type="ordered locus">ABO_1154</name>
</gene>
<comment type="function">
    <text evidence="1">Involved in unsaturated fatty acids biosynthesis. Catalyzes the dehydration of short chain beta-hydroxyacyl-ACPs and long chain saturated and unsaturated beta-hydroxyacyl-ACPs.</text>
</comment>
<comment type="catalytic activity">
    <reaction evidence="1">
        <text>a (3R)-hydroxyacyl-[ACP] = a (2E)-enoyl-[ACP] + H2O</text>
        <dbReference type="Rhea" id="RHEA:13097"/>
        <dbReference type="Rhea" id="RHEA-COMP:9925"/>
        <dbReference type="Rhea" id="RHEA-COMP:9945"/>
        <dbReference type="ChEBI" id="CHEBI:15377"/>
        <dbReference type="ChEBI" id="CHEBI:78784"/>
        <dbReference type="ChEBI" id="CHEBI:78827"/>
        <dbReference type="EC" id="4.2.1.59"/>
    </reaction>
</comment>
<comment type="subcellular location">
    <subcellularLocation>
        <location evidence="1">Cytoplasm</location>
    </subcellularLocation>
</comment>
<comment type="similarity">
    <text evidence="1">Belongs to the thioester dehydratase family. FabZ subfamily.</text>
</comment>
<comment type="sequence caution" evidence="2">
    <conflict type="erroneous initiation">
        <sequence resource="EMBL-CDS" id="CAL16602"/>
    </conflict>
</comment>
<reference key="1">
    <citation type="journal article" date="2006" name="Nat. Biotechnol.">
        <title>Genome sequence of the ubiquitous hydrocarbon-degrading marine bacterium Alcanivorax borkumensis.</title>
        <authorList>
            <person name="Schneiker S."/>
            <person name="Martins dos Santos V.A.P."/>
            <person name="Bartels D."/>
            <person name="Bekel T."/>
            <person name="Brecht M."/>
            <person name="Buhrmester J."/>
            <person name="Chernikova T.N."/>
            <person name="Denaro R."/>
            <person name="Ferrer M."/>
            <person name="Gertler C."/>
            <person name="Goesmann A."/>
            <person name="Golyshina O.V."/>
            <person name="Kaminski F."/>
            <person name="Khachane A.N."/>
            <person name="Lang S."/>
            <person name="Linke B."/>
            <person name="McHardy A.C."/>
            <person name="Meyer F."/>
            <person name="Nechitaylo T."/>
            <person name="Puehler A."/>
            <person name="Regenhardt D."/>
            <person name="Rupp O."/>
            <person name="Sabirova J.S."/>
            <person name="Selbitschka W."/>
            <person name="Yakimov M.M."/>
            <person name="Timmis K.N."/>
            <person name="Vorhoelter F.-J."/>
            <person name="Weidner S."/>
            <person name="Kaiser O."/>
            <person name="Golyshin P.N."/>
        </authorList>
    </citation>
    <scope>NUCLEOTIDE SEQUENCE [LARGE SCALE GENOMIC DNA]</scope>
    <source>
        <strain>ATCC 700651 / DSM 11573 / NCIMB 13689 / SK2</strain>
    </source>
</reference>
<proteinExistence type="inferred from homology"/>
<evidence type="ECO:0000255" key="1">
    <source>
        <dbReference type="HAMAP-Rule" id="MF_00406"/>
    </source>
</evidence>
<evidence type="ECO:0000305" key="2"/>
<name>FABZ_ALCBS</name>
<organism>
    <name type="scientific">Alcanivorax borkumensis (strain ATCC 700651 / DSM 11573 / NCIMB 13689 / SK2)</name>
    <dbReference type="NCBI Taxonomy" id="393595"/>
    <lineage>
        <taxon>Bacteria</taxon>
        <taxon>Pseudomonadati</taxon>
        <taxon>Pseudomonadota</taxon>
        <taxon>Gammaproteobacteria</taxon>
        <taxon>Oceanospirillales</taxon>
        <taxon>Alcanivoracaceae</taxon>
        <taxon>Alcanivorax</taxon>
    </lineage>
</organism>
<keyword id="KW-0963">Cytoplasm</keyword>
<keyword id="KW-0441">Lipid A biosynthesis</keyword>
<keyword id="KW-0444">Lipid biosynthesis</keyword>
<keyword id="KW-0443">Lipid metabolism</keyword>
<keyword id="KW-0456">Lyase</keyword>
<keyword id="KW-1185">Reference proteome</keyword>
<feature type="chain" id="PRO_0000340754" description="3-hydroxyacyl-[acyl-carrier-protein] dehydratase FabZ">
    <location>
        <begin position="1"/>
        <end position="144"/>
    </location>
</feature>
<feature type="active site" evidence="1">
    <location>
        <position position="47"/>
    </location>
</feature>
<dbReference type="EC" id="4.2.1.59" evidence="1"/>
<dbReference type="EMBL" id="AM286690">
    <property type="protein sequence ID" value="CAL16602.1"/>
    <property type="status" value="ALT_INIT"/>
    <property type="molecule type" value="Genomic_DNA"/>
</dbReference>
<dbReference type="SMR" id="Q0VQE6"/>
<dbReference type="STRING" id="393595.ABO_1154"/>
<dbReference type="KEGG" id="abo:ABO_1154"/>
<dbReference type="eggNOG" id="COG0764">
    <property type="taxonomic scope" value="Bacteria"/>
</dbReference>
<dbReference type="HOGENOM" id="CLU_078912_1_0_6"/>
<dbReference type="Proteomes" id="UP000008871">
    <property type="component" value="Chromosome"/>
</dbReference>
<dbReference type="GO" id="GO:0005737">
    <property type="term" value="C:cytoplasm"/>
    <property type="evidence" value="ECO:0007669"/>
    <property type="project" value="UniProtKB-SubCell"/>
</dbReference>
<dbReference type="GO" id="GO:0016020">
    <property type="term" value="C:membrane"/>
    <property type="evidence" value="ECO:0007669"/>
    <property type="project" value="GOC"/>
</dbReference>
<dbReference type="GO" id="GO:0019171">
    <property type="term" value="F:(3R)-hydroxyacyl-[acyl-carrier-protein] dehydratase activity"/>
    <property type="evidence" value="ECO:0007669"/>
    <property type="project" value="UniProtKB-EC"/>
</dbReference>
<dbReference type="GO" id="GO:0006633">
    <property type="term" value="P:fatty acid biosynthetic process"/>
    <property type="evidence" value="ECO:0007669"/>
    <property type="project" value="UniProtKB-UniRule"/>
</dbReference>
<dbReference type="GO" id="GO:0009245">
    <property type="term" value="P:lipid A biosynthetic process"/>
    <property type="evidence" value="ECO:0007669"/>
    <property type="project" value="UniProtKB-UniRule"/>
</dbReference>
<dbReference type="CDD" id="cd01288">
    <property type="entry name" value="FabZ"/>
    <property type="match status" value="1"/>
</dbReference>
<dbReference type="FunFam" id="3.10.129.10:FF:000001">
    <property type="entry name" value="3-hydroxyacyl-[acyl-carrier-protein] dehydratase FabZ"/>
    <property type="match status" value="1"/>
</dbReference>
<dbReference type="Gene3D" id="3.10.129.10">
    <property type="entry name" value="Hotdog Thioesterase"/>
    <property type="match status" value="1"/>
</dbReference>
<dbReference type="HAMAP" id="MF_00406">
    <property type="entry name" value="FabZ"/>
    <property type="match status" value="1"/>
</dbReference>
<dbReference type="InterPro" id="IPR013114">
    <property type="entry name" value="FabA_FabZ"/>
</dbReference>
<dbReference type="InterPro" id="IPR010084">
    <property type="entry name" value="FabZ"/>
</dbReference>
<dbReference type="InterPro" id="IPR029069">
    <property type="entry name" value="HotDog_dom_sf"/>
</dbReference>
<dbReference type="NCBIfam" id="TIGR01750">
    <property type="entry name" value="fabZ"/>
    <property type="match status" value="1"/>
</dbReference>
<dbReference type="NCBIfam" id="NF000582">
    <property type="entry name" value="PRK00006.1"/>
    <property type="match status" value="1"/>
</dbReference>
<dbReference type="PANTHER" id="PTHR30272">
    <property type="entry name" value="3-HYDROXYACYL-[ACYL-CARRIER-PROTEIN] DEHYDRATASE"/>
    <property type="match status" value="1"/>
</dbReference>
<dbReference type="PANTHER" id="PTHR30272:SF1">
    <property type="entry name" value="3-HYDROXYACYL-[ACYL-CARRIER-PROTEIN] DEHYDRATASE"/>
    <property type="match status" value="1"/>
</dbReference>
<dbReference type="Pfam" id="PF07977">
    <property type="entry name" value="FabA"/>
    <property type="match status" value="1"/>
</dbReference>
<dbReference type="SUPFAM" id="SSF54637">
    <property type="entry name" value="Thioesterase/thiol ester dehydrase-isomerase"/>
    <property type="match status" value="1"/>
</dbReference>
<accession>Q0VQE6</accession>
<sequence length="144" mass="16287">MDIKEVREYLPHRYPFLLIDRVLNIEPGKRIEALKNVTINEPFFNGHFPEEPIMPGVLIIEAMAQAAGILGFVTENKKPSDGYIYLLVGTDKARFKRQVVPGDTLHLFAEYVVIKRNIIKFTCEAQVDGKTVASAEMLVAEQKV</sequence>